<feature type="signal peptide" evidence="3">
    <location>
        <begin position="1"/>
        <end position="24"/>
    </location>
</feature>
<feature type="chain" id="PRO_0000017334" description="Low-density lipoprotein receptor-related protein 8">
    <location>
        <begin position="25"/>
        <end position="917"/>
    </location>
</feature>
<feature type="topological domain" description="Extracellular" evidence="3">
    <location>
        <begin position="25"/>
        <end position="838"/>
    </location>
</feature>
<feature type="transmembrane region" description="Helical" evidence="3">
    <location>
        <begin position="839"/>
        <end position="861"/>
    </location>
</feature>
<feature type="topological domain" description="Cytoplasmic" evidence="3">
    <location>
        <begin position="862"/>
        <end position="917"/>
    </location>
</feature>
<feature type="domain" description="LDL-receptor class A 1" evidence="5">
    <location>
        <begin position="28"/>
        <end position="64"/>
    </location>
</feature>
<feature type="domain" description="LDL-receptor class A 2" evidence="5">
    <location>
        <begin position="67"/>
        <end position="105"/>
    </location>
</feature>
<feature type="domain" description="LDL-receptor class A 3" evidence="5">
    <location>
        <begin position="108"/>
        <end position="146"/>
    </location>
</feature>
<feature type="domain" description="LDL-receptor class A 4" evidence="5">
    <location>
        <begin position="148"/>
        <end position="184"/>
    </location>
</feature>
<feature type="domain" description="LDL-receptor class A 5" evidence="5">
    <location>
        <begin position="187"/>
        <end position="225"/>
    </location>
</feature>
<feature type="domain" description="LDL-receptor class A 6" evidence="5">
    <location>
        <begin position="272"/>
        <end position="308"/>
    </location>
</feature>
<feature type="domain" description="LDL-receptor class A 7" evidence="5">
    <location>
        <begin position="312"/>
        <end position="351"/>
    </location>
</feature>
<feature type="domain" description="EGF-like 1" evidence="4">
    <location>
        <begin position="346"/>
        <end position="390"/>
    </location>
</feature>
<feature type="domain" description="EGF-like 2; calcium-binding" evidence="4">
    <location>
        <begin position="391"/>
        <end position="430"/>
    </location>
</feature>
<feature type="repeat" description="LDL-receptor class B 1">
    <location>
        <begin position="476"/>
        <end position="522"/>
    </location>
</feature>
<feature type="repeat" description="LDL-receptor class B 2">
    <location>
        <begin position="523"/>
        <end position="565"/>
    </location>
</feature>
<feature type="repeat" description="LDL-receptor class B 3">
    <location>
        <begin position="566"/>
        <end position="609"/>
    </location>
</feature>
<feature type="repeat" description="LDL-receptor class B 4">
    <location>
        <begin position="610"/>
        <end position="652"/>
    </location>
</feature>
<feature type="repeat" description="LDL-receptor class B 5">
    <location>
        <begin position="653"/>
        <end position="695"/>
    </location>
</feature>
<feature type="region of interest" description="Clustered O-linked oligosaccharides">
    <location>
        <begin position="754"/>
        <end position="813"/>
    </location>
</feature>
<feature type="binding site" evidence="1">
    <location>
        <position position="46"/>
    </location>
    <ligand>
        <name>Ca(2+)</name>
        <dbReference type="ChEBI" id="CHEBI:29108"/>
    </ligand>
</feature>
<feature type="binding site" evidence="1">
    <location>
        <position position="49"/>
    </location>
    <ligand>
        <name>Ca(2+)</name>
        <dbReference type="ChEBI" id="CHEBI:29108"/>
    </ligand>
</feature>
<feature type="binding site" evidence="1">
    <location>
        <position position="51"/>
    </location>
    <ligand>
        <name>Ca(2+)</name>
        <dbReference type="ChEBI" id="CHEBI:29108"/>
    </ligand>
</feature>
<feature type="binding site" evidence="1">
    <location>
        <position position="53"/>
    </location>
    <ligand>
        <name>Ca(2+)</name>
        <dbReference type="ChEBI" id="CHEBI:29108"/>
    </ligand>
</feature>
<feature type="binding site" evidence="1">
    <location>
        <position position="59"/>
    </location>
    <ligand>
        <name>Ca(2+)</name>
        <dbReference type="ChEBI" id="CHEBI:29108"/>
    </ligand>
</feature>
<feature type="binding site" evidence="1">
    <location>
        <position position="60"/>
    </location>
    <ligand>
        <name>Ca(2+)</name>
        <dbReference type="ChEBI" id="CHEBI:29108"/>
    </ligand>
</feature>
<feature type="glycosylation site" description="N-linked (GlcNAc...) asparagine" evidence="3">
    <location>
        <position position="158"/>
    </location>
</feature>
<feature type="glycosylation site" description="N-linked (GlcNAc...) asparagine" evidence="3">
    <location>
        <position position="196"/>
    </location>
</feature>
<feature type="glycosylation site" description="N-linked (GlcNAc...) asparagine" evidence="3">
    <location>
        <position position="532"/>
    </location>
</feature>
<feature type="glycosylation site" description="N-linked (GlcNAc...) asparagine" evidence="3">
    <location>
        <position position="628"/>
    </location>
</feature>
<feature type="glycosylation site" description="N-linked (GlcNAc...) asparagine" evidence="3">
    <location>
        <position position="782"/>
    </location>
</feature>
<feature type="glycosylation site" description="N-linked (GlcNAc...) asparagine" evidence="3">
    <location>
        <position position="820"/>
    </location>
</feature>
<feature type="disulfide bond" evidence="5">
    <location>
        <begin position="29"/>
        <end position="41"/>
    </location>
</feature>
<feature type="disulfide bond" evidence="5">
    <location>
        <begin position="36"/>
        <end position="54"/>
    </location>
</feature>
<feature type="disulfide bond" evidence="5">
    <location>
        <begin position="48"/>
        <end position="63"/>
    </location>
</feature>
<feature type="disulfide bond" evidence="5">
    <location>
        <begin position="68"/>
        <end position="80"/>
    </location>
</feature>
<feature type="disulfide bond" evidence="5">
    <location>
        <begin position="75"/>
        <end position="93"/>
    </location>
</feature>
<feature type="disulfide bond" evidence="5">
    <location>
        <begin position="87"/>
        <end position="104"/>
    </location>
</feature>
<feature type="disulfide bond" evidence="5">
    <location>
        <begin position="109"/>
        <end position="123"/>
    </location>
</feature>
<feature type="disulfide bond" evidence="5">
    <location>
        <begin position="116"/>
        <end position="136"/>
    </location>
</feature>
<feature type="disulfide bond" evidence="5">
    <location>
        <begin position="130"/>
        <end position="145"/>
    </location>
</feature>
<feature type="disulfide bond" evidence="5">
    <location>
        <begin position="149"/>
        <end position="161"/>
    </location>
</feature>
<feature type="disulfide bond" evidence="5">
    <location>
        <begin position="156"/>
        <end position="174"/>
    </location>
</feature>
<feature type="disulfide bond" evidence="5">
    <location>
        <begin position="168"/>
        <end position="183"/>
    </location>
</feature>
<feature type="disulfide bond" evidence="5">
    <location>
        <begin position="188"/>
        <end position="200"/>
    </location>
</feature>
<feature type="disulfide bond" evidence="5">
    <location>
        <begin position="195"/>
        <end position="213"/>
    </location>
</feature>
<feature type="disulfide bond" evidence="5">
    <location>
        <begin position="207"/>
        <end position="224"/>
    </location>
</feature>
<feature type="disulfide bond" evidence="5">
    <location>
        <begin position="241"/>
        <end position="259"/>
    </location>
</feature>
<feature type="disulfide bond" evidence="5">
    <location>
        <begin position="253"/>
        <end position="268"/>
    </location>
</feature>
<feature type="disulfide bond" evidence="5">
    <location>
        <begin position="273"/>
        <end position="285"/>
    </location>
</feature>
<feature type="disulfide bond" evidence="5">
    <location>
        <begin position="280"/>
        <end position="298"/>
    </location>
</feature>
<feature type="disulfide bond" evidence="5">
    <location>
        <begin position="292"/>
        <end position="307"/>
    </location>
</feature>
<feature type="disulfide bond" evidence="5">
    <location>
        <begin position="313"/>
        <end position="326"/>
    </location>
</feature>
<feature type="disulfide bond" evidence="5">
    <location>
        <begin position="321"/>
        <end position="339"/>
    </location>
</feature>
<feature type="disulfide bond" evidence="5">
    <location>
        <begin position="333"/>
        <end position="350"/>
    </location>
</feature>
<feature type="disulfide bond" evidence="4">
    <location>
        <begin position="355"/>
        <end position="366"/>
    </location>
</feature>
<feature type="disulfide bond" evidence="4">
    <location>
        <begin position="362"/>
        <end position="375"/>
    </location>
</feature>
<feature type="disulfide bond" evidence="4">
    <location>
        <begin position="377"/>
        <end position="389"/>
    </location>
</feature>
<feature type="disulfide bond" evidence="4">
    <location>
        <begin position="395"/>
        <end position="405"/>
    </location>
</feature>
<feature type="disulfide bond" evidence="4">
    <location>
        <begin position="401"/>
        <end position="414"/>
    </location>
</feature>
<feature type="disulfide bond" evidence="4">
    <location>
        <begin position="416"/>
        <end position="429"/>
    </location>
</feature>
<evidence type="ECO:0000250" key="1">
    <source>
        <dbReference type="UniProtKB" id="Q14114"/>
    </source>
</evidence>
<evidence type="ECO:0000250" key="2">
    <source>
        <dbReference type="UniProtKB" id="Q924X6"/>
    </source>
</evidence>
<evidence type="ECO:0000255" key="3"/>
<evidence type="ECO:0000255" key="4">
    <source>
        <dbReference type="PROSITE-ProRule" id="PRU00076"/>
    </source>
</evidence>
<evidence type="ECO:0000255" key="5">
    <source>
        <dbReference type="PROSITE-ProRule" id="PRU00124"/>
    </source>
</evidence>
<evidence type="ECO:0000269" key="6">
    <source>
    </source>
</evidence>
<evidence type="ECO:0000305" key="7"/>
<keyword id="KW-0025">Alternative splicing</keyword>
<keyword id="KW-0106">Calcium</keyword>
<keyword id="KW-1003">Cell membrane</keyword>
<keyword id="KW-1015">Disulfide bond</keyword>
<keyword id="KW-0245">EGF-like domain</keyword>
<keyword id="KW-0254">Endocytosis</keyword>
<keyword id="KW-0325">Glycoprotein</keyword>
<keyword id="KW-0472">Membrane</keyword>
<keyword id="KW-0479">Metal-binding</keyword>
<keyword id="KW-0675">Receptor</keyword>
<keyword id="KW-1185">Reference proteome</keyword>
<keyword id="KW-0677">Repeat</keyword>
<keyword id="KW-0732">Signal</keyword>
<keyword id="KW-0812">Transmembrane</keyword>
<keyword id="KW-1133">Transmembrane helix</keyword>
<organism>
    <name type="scientific">Gallus gallus</name>
    <name type="common">Chicken</name>
    <dbReference type="NCBI Taxonomy" id="9031"/>
    <lineage>
        <taxon>Eukaryota</taxon>
        <taxon>Metazoa</taxon>
        <taxon>Chordata</taxon>
        <taxon>Craniata</taxon>
        <taxon>Vertebrata</taxon>
        <taxon>Euteleostomi</taxon>
        <taxon>Archelosauria</taxon>
        <taxon>Archosauria</taxon>
        <taxon>Dinosauria</taxon>
        <taxon>Saurischia</taxon>
        <taxon>Theropoda</taxon>
        <taxon>Coelurosauria</taxon>
        <taxon>Aves</taxon>
        <taxon>Neognathae</taxon>
        <taxon>Galloanserae</taxon>
        <taxon>Galliformes</taxon>
        <taxon>Phasianidae</taxon>
        <taxon>Phasianinae</taxon>
        <taxon>Gallus</taxon>
    </lineage>
</organism>
<dbReference type="EMBL" id="X97001">
    <property type="protein sequence ID" value="CAA65729.1"/>
    <property type="molecule type" value="mRNA"/>
</dbReference>
<dbReference type="RefSeq" id="NP_990517.1">
    <property type="nucleotide sequence ID" value="NM_205186.2"/>
</dbReference>
<dbReference type="SMR" id="Q98931"/>
<dbReference type="BioGRID" id="676368">
    <property type="interactions" value="2"/>
</dbReference>
<dbReference type="FunCoup" id="Q98931">
    <property type="interactions" value="921"/>
</dbReference>
<dbReference type="STRING" id="9031.ENSGALP00000017370"/>
<dbReference type="GlyCosmos" id="Q98931">
    <property type="glycosylation" value="6 sites, No reported glycans"/>
</dbReference>
<dbReference type="GlyGen" id="Q98931">
    <property type="glycosylation" value="6 sites"/>
</dbReference>
<dbReference type="PaxDb" id="9031-ENSGALP00000017370"/>
<dbReference type="GeneID" id="396102"/>
<dbReference type="KEGG" id="gga:396102"/>
<dbReference type="CTD" id="7804"/>
<dbReference type="VEuPathDB" id="HostDB:geneid_396102"/>
<dbReference type="eggNOG" id="KOG1215">
    <property type="taxonomic scope" value="Eukaryota"/>
</dbReference>
<dbReference type="InParanoid" id="Q98931"/>
<dbReference type="OrthoDB" id="5958943at2759"/>
<dbReference type="PhylomeDB" id="Q98931"/>
<dbReference type="PRO" id="PR:Q98931"/>
<dbReference type="Proteomes" id="UP000000539">
    <property type="component" value="Unassembled WGS sequence"/>
</dbReference>
<dbReference type="GO" id="GO:0005901">
    <property type="term" value="C:caveola"/>
    <property type="evidence" value="ECO:0000318"/>
    <property type="project" value="GO_Central"/>
</dbReference>
<dbReference type="GO" id="GO:0005886">
    <property type="term" value="C:plasma membrane"/>
    <property type="evidence" value="ECO:0000318"/>
    <property type="project" value="GO_Central"/>
</dbReference>
<dbReference type="GO" id="GO:0005509">
    <property type="term" value="F:calcium ion binding"/>
    <property type="evidence" value="ECO:0007669"/>
    <property type="project" value="InterPro"/>
</dbReference>
<dbReference type="GO" id="GO:0006897">
    <property type="term" value="P:endocytosis"/>
    <property type="evidence" value="ECO:0007669"/>
    <property type="project" value="UniProtKB-KW"/>
</dbReference>
<dbReference type="GO" id="GO:0021517">
    <property type="term" value="P:ventral spinal cord development"/>
    <property type="evidence" value="ECO:0000270"/>
    <property type="project" value="UniProtKB"/>
</dbReference>
<dbReference type="CDD" id="cd00054">
    <property type="entry name" value="EGF_CA"/>
    <property type="match status" value="2"/>
</dbReference>
<dbReference type="CDD" id="cd00112">
    <property type="entry name" value="LDLa"/>
    <property type="match status" value="8"/>
</dbReference>
<dbReference type="FunFam" id="2.10.25.10:FF:000009">
    <property type="entry name" value="Low-density lipoprotein receptor isoform 1"/>
    <property type="match status" value="1"/>
</dbReference>
<dbReference type="FunFam" id="2.120.10.30:FF:000002">
    <property type="entry name" value="low-density lipoprotein receptor isoform X1"/>
    <property type="match status" value="1"/>
</dbReference>
<dbReference type="FunFam" id="4.10.400.10:FF:000034">
    <property type="entry name" value="Low-density lipoprotein receptor-related protein 2"/>
    <property type="match status" value="1"/>
</dbReference>
<dbReference type="FunFam" id="4.10.400.10:FF:000038">
    <property type="entry name" value="Very low density lipoprotein receptor"/>
    <property type="match status" value="1"/>
</dbReference>
<dbReference type="FunFam" id="4.10.400.10:FF:000043">
    <property type="entry name" value="Very low density lipoprotein receptor"/>
    <property type="match status" value="1"/>
</dbReference>
<dbReference type="FunFam" id="4.10.400.10:FF:000046">
    <property type="entry name" value="Very low density lipoprotein receptor"/>
    <property type="match status" value="1"/>
</dbReference>
<dbReference type="FunFam" id="4.10.400.10:FF:000053">
    <property type="entry name" value="Very low density lipoprotein receptor"/>
    <property type="match status" value="1"/>
</dbReference>
<dbReference type="Gene3D" id="2.10.25.10">
    <property type="entry name" value="Laminin"/>
    <property type="match status" value="3"/>
</dbReference>
<dbReference type="Gene3D" id="4.10.400.10">
    <property type="entry name" value="Low-density Lipoprotein Receptor"/>
    <property type="match status" value="8"/>
</dbReference>
<dbReference type="Gene3D" id="2.120.10.30">
    <property type="entry name" value="TolB, C-terminal domain"/>
    <property type="match status" value="1"/>
</dbReference>
<dbReference type="InterPro" id="IPR011042">
    <property type="entry name" value="6-blade_b-propeller_TolB-like"/>
</dbReference>
<dbReference type="InterPro" id="IPR001881">
    <property type="entry name" value="EGF-like_Ca-bd_dom"/>
</dbReference>
<dbReference type="InterPro" id="IPR000742">
    <property type="entry name" value="EGF-like_dom"/>
</dbReference>
<dbReference type="InterPro" id="IPR000152">
    <property type="entry name" value="EGF-type_Asp/Asn_hydroxyl_site"/>
</dbReference>
<dbReference type="InterPro" id="IPR018097">
    <property type="entry name" value="EGF_Ca-bd_CS"/>
</dbReference>
<dbReference type="InterPro" id="IPR009030">
    <property type="entry name" value="Growth_fac_rcpt_cys_sf"/>
</dbReference>
<dbReference type="InterPro" id="IPR036055">
    <property type="entry name" value="LDL_receptor-like_sf"/>
</dbReference>
<dbReference type="InterPro" id="IPR051221">
    <property type="entry name" value="LDLR-related"/>
</dbReference>
<dbReference type="InterPro" id="IPR023415">
    <property type="entry name" value="LDLR_class-A_CS"/>
</dbReference>
<dbReference type="InterPro" id="IPR000033">
    <property type="entry name" value="LDLR_classB_rpt"/>
</dbReference>
<dbReference type="InterPro" id="IPR002172">
    <property type="entry name" value="LDrepeatLR_classA_rpt"/>
</dbReference>
<dbReference type="InterPro" id="IPR049883">
    <property type="entry name" value="NOTCH1_EGF-like"/>
</dbReference>
<dbReference type="PANTHER" id="PTHR22722">
    <property type="entry name" value="LOW-DENSITY LIPOPROTEIN RECEPTOR-RELATED PROTEIN 2-RELATED"/>
    <property type="match status" value="1"/>
</dbReference>
<dbReference type="Pfam" id="PF07645">
    <property type="entry name" value="EGF_CA"/>
    <property type="match status" value="1"/>
</dbReference>
<dbReference type="Pfam" id="PF14670">
    <property type="entry name" value="FXa_inhibition"/>
    <property type="match status" value="1"/>
</dbReference>
<dbReference type="Pfam" id="PF00057">
    <property type="entry name" value="Ldl_recept_a"/>
    <property type="match status" value="8"/>
</dbReference>
<dbReference type="Pfam" id="PF00058">
    <property type="entry name" value="Ldl_recept_b"/>
    <property type="match status" value="5"/>
</dbReference>
<dbReference type="PRINTS" id="PR00261">
    <property type="entry name" value="LDLRECEPTOR"/>
</dbReference>
<dbReference type="SMART" id="SM00181">
    <property type="entry name" value="EGF"/>
    <property type="match status" value="5"/>
</dbReference>
<dbReference type="SMART" id="SM00179">
    <property type="entry name" value="EGF_CA"/>
    <property type="match status" value="2"/>
</dbReference>
<dbReference type="SMART" id="SM00192">
    <property type="entry name" value="LDLa"/>
    <property type="match status" value="8"/>
</dbReference>
<dbReference type="SMART" id="SM00135">
    <property type="entry name" value="LY"/>
    <property type="match status" value="5"/>
</dbReference>
<dbReference type="SUPFAM" id="SSF57184">
    <property type="entry name" value="Growth factor receptor domain"/>
    <property type="match status" value="1"/>
</dbReference>
<dbReference type="SUPFAM" id="SSF57424">
    <property type="entry name" value="LDL receptor-like module"/>
    <property type="match status" value="7"/>
</dbReference>
<dbReference type="SUPFAM" id="SSF63825">
    <property type="entry name" value="YWTD domain"/>
    <property type="match status" value="1"/>
</dbReference>
<dbReference type="PROSITE" id="PS00010">
    <property type="entry name" value="ASX_HYDROXYL"/>
    <property type="match status" value="2"/>
</dbReference>
<dbReference type="PROSITE" id="PS01186">
    <property type="entry name" value="EGF_2"/>
    <property type="match status" value="2"/>
</dbReference>
<dbReference type="PROSITE" id="PS50026">
    <property type="entry name" value="EGF_3"/>
    <property type="match status" value="2"/>
</dbReference>
<dbReference type="PROSITE" id="PS01187">
    <property type="entry name" value="EGF_CA"/>
    <property type="match status" value="1"/>
</dbReference>
<dbReference type="PROSITE" id="PS01209">
    <property type="entry name" value="LDLRA_1"/>
    <property type="match status" value="7"/>
</dbReference>
<dbReference type="PROSITE" id="PS50068">
    <property type="entry name" value="LDLRA_2"/>
    <property type="match status" value="8"/>
</dbReference>
<dbReference type="PROSITE" id="PS51120">
    <property type="entry name" value="LDLRB"/>
    <property type="match status" value="5"/>
</dbReference>
<protein>
    <recommendedName>
        <fullName>Low-density lipoprotein receptor-related protein 8</fullName>
        <shortName>LRP-8</shortName>
    </recommendedName>
    <alternativeName>
        <fullName>Apolipoprotein E receptor 2</fullName>
    </alternativeName>
    <alternativeName>
        <fullName>Protein LR8B</fullName>
    </alternativeName>
</protein>
<gene>
    <name type="primary">LRP8</name>
    <name type="synonym">LR8B</name>
</gene>
<proteinExistence type="evidence at transcript level"/>
<accession>Q98931</accession>
<accession>Q90883</accession>
<reference key="1">
    <citation type="journal article" date="1996" name="J. Biol. Chem.">
        <title>A new LDL receptor homologue with 8 ligand binding repeats in brain of chicken and mouse.</title>
        <authorList>
            <person name="Novak S."/>
            <person name="Hiesberger T."/>
            <person name="Schneider W.J."/>
            <person name="Nimpf J."/>
        </authorList>
    </citation>
    <scope>NUCLEOTIDE SEQUENCE [MRNA] (ISOFORM 1)</scope>
    <scope>TISSUE SPECIFICITY</scope>
    <source>
        <strain>White leghorn</strain>
        <tissue>Brain</tissue>
    </source>
</reference>
<reference key="2">
    <citation type="journal article" date="2001" name="J. Biol. Chem.">
        <title>Alternative splicing in the ligand binding domain of mouse ApoE receptor-2 produces receptor variants binding reelin but not alpha2-macroglobulin.</title>
        <authorList>
            <person name="Brandes C."/>
            <person name="Kahr L."/>
            <person name="Stockinger W."/>
            <person name="Hiesberger T."/>
            <person name="Schneider W.J."/>
            <person name="Nimpf J."/>
        </authorList>
    </citation>
    <scope>ALTERNATIVE SPLICING</scope>
</reference>
<sequence length="917" mass="101379">MCRPALARLLLLQLLLLKLYLGKGAMKECDKDQFQCRNERCIPAVWACDEDNDCSDNSDEADCPKKTCAETDFACDNGHCIPDRWKCDGEEECSDGSDESEAACTKQVCPAEKISCGDLSNKCIPSSWRCDGQKDCESGIDEAGCAPACSPDEFQCSNKTCISINFVCDGYNNCGDGSDEKKCSPLTCSPNEFQCNNSVCIPQLWVCDNQADCEDHSDESIERCGYDAKAFNTCAAHEFQCGNGECILLNWKCDGDEDCKDKSDEQDCPLVTCRPDEFQCGDGTCIHGAKQCDKVHDCPDNSDEAGCVQESACESPSKFQCKSGECIDGGKVCDLHRDCRDWSDEPLKECGINECSLNNGGCSHICKDLKIGYECECPPGYKLLDKKTCGDIDECENPDACSQICINYKGDYKCECYEGYEMDTLSKNCKAVGKSPYLIFTNRHEVRKIDLVKRDYSRIIPMLKNVVALDVEVATNRIYWCDLFYRKIYSAYIDKASDTAEQVILIDSQLNSPEGVAIDWVHKNIYWTDSGNKTISVATADGSRRRTVFNSDLSEPRAIAVDPTRRFMYWSDWGDKAKIEKAGLNGVGRQVLVSDNIEWPNGITLDLLNQRLYWVDSKLHSLSCIDFNGSNREVLISSIDDLSHPFGLAVFEDRVFWTDLENEAIFSANRLSGLDISVLAENLNNPHDIVVFHELKQPKAPDSCELSPQPNGGCEYLCLPAPHISPRSPKFTCACPDNMWLGPDMKKCYKELPTTPATVEVPTTTTSHPAATSTVTVTGSANTTTAVIPRAVSEATTAIPSSHSTTSLLIDSEMTTGNSNLSQHYSNNGQGFDSTVTAAVIGIVIPVVVIGLLCMGGYLIWRNWKRKNTKSMNFDNPVYRKTTEEEDEDEIHIGRTAQIGHVYPARVALSLEDDGLP</sequence>
<comment type="function">
    <text evidence="2">Cell surface receptor for Reelin (RELN) and apolipoprotein E (apoE)-containing ligands. Also binds alpha2-macroglobulin. LRP8 participates in transmitting the extracellular Reelin signal to intracellular signaling processes, by binding to DAB1 on its cytoplasmic tail. Reelin acts via both the VLDL receptor (VLDLR) and LRP8 to regulate DAB1 tyrosine phosphorylation and microtubule function in neurons. LRP8 has higher affinity for Reelin than VLDLR. LRP8 is thus a key component of the Reelin pathway which governs neuronal layering of the forebrain during embryonic brain development. Not required for endocytic uptake of SEPP1 in the kidney which is mediated by LRP2 (By similarity).</text>
</comment>
<comment type="subunit">
    <text evidence="1">Homooligomer.</text>
</comment>
<comment type="subcellular location">
    <subcellularLocation>
        <location evidence="1">Cell membrane</location>
        <topology evidence="3">Single-pass type I membrane protein</topology>
    </subcellularLocation>
</comment>
<comment type="alternative products">
    <event type="alternative splicing"/>
    <isoform>
        <id>Q98931-1</id>
        <name>1</name>
        <sequence type="displayed"/>
    </isoform>
    <text>A number of isoforms are produced.</text>
</comment>
<comment type="tissue specificity">
    <text evidence="6">Mainly in brain.</text>
</comment>
<comment type="similarity">
    <text evidence="7">Belongs to the LDLR family.</text>
</comment>
<name>LRP8_CHICK</name>